<proteinExistence type="evidence at transcript level"/>
<evidence type="ECO:0000250" key="1">
    <source>
        <dbReference type="UniProtKB" id="P17483"/>
    </source>
</evidence>
<evidence type="ECO:0000255" key="2">
    <source>
        <dbReference type="PROSITE-ProRule" id="PRU00108"/>
    </source>
</evidence>
<evidence type="ECO:0000256" key="3">
    <source>
        <dbReference type="SAM" id="MobiDB-lite"/>
    </source>
</evidence>
<evidence type="ECO:0000305" key="4"/>
<accession>P10284</accession>
<accession>Q3UZB4</accession>
<accession>Q4VBG0</accession>
<comment type="function">
    <text>Sequence-specific transcription factor which is part of a developmental regulatory system that provides cells with specific positional identities on the anterior-posterior axis.</text>
</comment>
<comment type="subcellular location">
    <subcellularLocation>
        <location>Nucleus</location>
    </subcellularLocation>
</comment>
<comment type="similarity">
    <text evidence="4">Belongs to the Antp homeobox family. Deformed subfamily.</text>
</comment>
<sequence>MAMSSFLINSNYVDPKFPPCEEYSQSDYLPSDHSPGYYAGGQRRESGFQPEAAFGRRAPCTVQRYAACRDPGPPPPPPPPPPPPPPGLSPRAPVQPTAGALLPEPGQRSEAVSSSPPPPPCAQNPLHPSPSHSACKEPVVYPWMRKVHVSTVNPNYAGGEPKRSRTAYTRQQVLELEKEFHYNRYLTRRRRVEIAHALCLSERQIKIWFQNRRMKWKKDHKLPNTKIRSGGTAGAAGGPPGRPNGGPPAL</sequence>
<name>HXB4_MOUSE</name>
<gene>
    <name type="primary">Hoxb4</name>
    <name type="synonym">Hox-2.6</name>
    <name type="synonym">Hoxb-4</name>
</gene>
<keyword id="KW-0217">Developmental protein</keyword>
<keyword id="KW-0238">DNA-binding</keyword>
<keyword id="KW-0371">Homeobox</keyword>
<keyword id="KW-0539">Nucleus</keyword>
<keyword id="KW-0597">Phosphoprotein</keyword>
<keyword id="KW-1185">Reference proteome</keyword>
<keyword id="KW-0804">Transcription</keyword>
<keyword id="KW-0805">Transcription regulation</keyword>
<reference key="1">
    <citation type="journal article" date="1988" name="Genes Dev.">
        <title>Characterization of a murine homeo box gene, Hox-2.6, related to the Drosophila Deformed gene.</title>
        <authorList>
            <person name="Graham A."/>
            <person name="Papalopulu N."/>
            <person name="Lorimer J."/>
            <person name="McVey J.H."/>
            <person name="Tuddenham E.G.D."/>
            <person name="Krumlauf R."/>
        </authorList>
    </citation>
    <scope>NUCLEOTIDE SEQUENCE [MRNA]</scope>
</reference>
<reference key="2">
    <citation type="journal article" date="2005" name="Science">
        <title>The transcriptional landscape of the mammalian genome.</title>
        <authorList>
            <person name="Carninci P."/>
            <person name="Kasukawa T."/>
            <person name="Katayama S."/>
            <person name="Gough J."/>
            <person name="Frith M.C."/>
            <person name="Maeda N."/>
            <person name="Oyama R."/>
            <person name="Ravasi T."/>
            <person name="Lenhard B."/>
            <person name="Wells C."/>
            <person name="Kodzius R."/>
            <person name="Shimokawa K."/>
            <person name="Bajic V.B."/>
            <person name="Brenner S.E."/>
            <person name="Batalov S."/>
            <person name="Forrest A.R."/>
            <person name="Zavolan M."/>
            <person name="Davis M.J."/>
            <person name="Wilming L.G."/>
            <person name="Aidinis V."/>
            <person name="Allen J.E."/>
            <person name="Ambesi-Impiombato A."/>
            <person name="Apweiler R."/>
            <person name="Aturaliya R.N."/>
            <person name="Bailey T.L."/>
            <person name="Bansal M."/>
            <person name="Baxter L."/>
            <person name="Beisel K.W."/>
            <person name="Bersano T."/>
            <person name="Bono H."/>
            <person name="Chalk A.M."/>
            <person name="Chiu K.P."/>
            <person name="Choudhary V."/>
            <person name="Christoffels A."/>
            <person name="Clutterbuck D.R."/>
            <person name="Crowe M.L."/>
            <person name="Dalla E."/>
            <person name="Dalrymple B.P."/>
            <person name="de Bono B."/>
            <person name="Della Gatta G."/>
            <person name="di Bernardo D."/>
            <person name="Down T."/>
            <person name="Engstrom P."/>
            <person name="Fagiolini M."/>
            <person name="Faulkner G."/>
            <person name="Fletcher C.F."/>
            <person name="Fukushima T."/>
            <person name="Furuno M."/>
            <person name="Futaki S."/>
            <person name="Gariboldi M."/>
            <person name="Georgii-Hemming P."/>
            <person name="Gingeras T.R."/>
            <person name="Gojobori T."/>
            <person name="Green R.E."/>
            <person name="Gustincich S."/>
            <person name="Harbers M."/>
            <person name="Hayashi Y."/>
            <person name="Hensch T.K."/>
            <person name="Hirokawa N."/>
            <person name="Hill D."/>
            <person name="Huminiecki L."/>
            <person name="Iacono M."/>
            <person name="Ikeo K."/>
            <person name="Iwama A."/>
            <person name="Ishikawa T."/>
            <person name="Jakt M."/>
            <person name="Kanapin A."/>
            <person name="Katoh M."/>
            <person name="Kawasawa Y."/>
            <person name="Kelso J."/>
            <person name="Kitamura H."/>
            <person name="Kitano H."/>
            <person name="Kollias G."/>
            <person name="Krishnan S.P."/>
            <person name="Kruger A."/>
            <person name="Kummerfeld S.K."/>
            <person name="Kurochkin I.V."/>
            <person name="Lareau L.F."/>
            <person name="Lazarevic D."/>
            <person name="Lipovich L."/>
            <person name="Liu J."/>
            <person name="Liuni S."/>
            <person name="McWilliam S."/>
            <person name="Madan Babu M."/>
            <person name="Madera M."/>
            <person name="Marchionni L."/>
            <person name="Matsuda H."/>
            <person name="Matsuzawa S."/>
            <person name="Miki H."/>
            <person name="Mignone F."/>
            <person name="Miyake S."/>
            <person name="Morris K."/>
            <person name="Mottagui-Tabar S."/>
            <person name="Mulder N."/>
            <person name="Nakano N."/>
            <person name="Nakauchi H."/>
            <person name="Ng P."/>
            <person name="Nilsson R."/>
            <person name="Nishiguchi S."/>
            <person name="Nishikawa S."/>
            <person name="Nori F."/>
            <person name="Ohara O."/>
            <person name="Okazaki Y."/>
            <person name="Orlando V."/>
            <person name="Pang K.C."/>
            <person name="Pavan W.J."/>
            <person name="Pavesi G."/>
            <person name="Pesole G."/>
            <person name="Petrovsky N."/>
            <person name="Piazza S."/>
            <person name="Reed J."/>
            <person name="Reid J.F."/>
            <person name="Ring B.Z."/>
            <person name="Ringwald M."/>
            <person name="Rost B."/>
            <person name="Ruan Y."/>
            <person name="Salzberg S.L."/>
            <person name="Sandelin A."/>
            <person name="Schneider C."/>
            <person name="Schoenbach C."/>
            <person name="Sekiguchi K."/>
            <person name="Semple C.A."/>
            <person name="Seno S."/>
            <person name="Sessa L."/>
            <person name="Sheng Y."/>
            <person name="Shibata Y."/>
            <person name="Shimada H."/>
            <person name="Shimada K."/>
            <person name="Silva D."/>
            <person name="Sinclair B."/>
            <person name="Sperling S."/>
            <person name="Stupka E."/>
            <person name="Sugiura K."/>
            <person name="Sultana R."/>
            <person name="Takenaka Y."/>
            <person name="Taki K."/>
            <person name="Tammoja K."/>
            <person name="Tan S.L."/>
            <person name="Tang S."/>
            <person name="Taylor M.S."/>
            <person name="Tegner J."/>
            <person name="Teichmann S.A."/>
            <person name="Ueda H.R."/>
            <person name="van Nimwegen E."/>
            <person name="Verardo R."/>
            <person name="Wei C.L."/>
            <person name="Yagi K."/>
            <person name="Yamanishi H."/>
            <person name="Zabarovsky E."/>
            <person name="Zhu S."/>
            <person name="Zimmer A."/>
            <person name="Hide W."/>
            <person name="Bult C."/>
            <person name="Grimmond S.M."/>
            <person name="Teasdale R.D."/>
            <person name="Liu E.T."/>
            <person name="Brusic V."/>
            <person name="Quackenbush J."/>
            <person name="Wahlestedt C."/>
            <person name="Mattick J.S."/>
            <person name="Hume D.A."/>
            <person name="Kai C."/>
            <person name="Sasaki D."/>
            <person name="Tomaru Y."/>
            <person name="Fukuda S."/>
            <person name="Kanamori-Katayama M."/>
            <person name="Suzuki M."/>
            <person name="Aoki J."/>
            <person name="Arakawa T."/>
            <person name="Iida J."/>
            <person name="Imamura K."/>
            <person name="Itoh M."/>
            <person name="Kato T."/>
            <person name="Kawaji H."/>
            <person name="Kawagashira N."/>
            <person name="Kawashima T."/>
            <person name="Kojima M."/>
            <person name="Kondo S."/>
            <person name="Konno H."/>
            <person name="Nakano K."/>
            <person name="Ninomiya N."/>
            <person name="Nishio T."/>
            <person name="Okada M."/>
            <person name="Plessy C."/>
            <person name="Shibata K."/>
            <person name="Shiraki T."/>
            <person name="Suzuki S."/>
            <person name="Tagami M."/>
            <person name="Waki K."/>
            <person name="Watahiki A."/>
            <person name="Okamura-Oho Y."/>
            <person name="Suzuki H."/>
            <person name="Kawai J."/>
            <person name="Hayashizaki Y."/>
        </authorList>
    </citation>
    <scope>NUCLEOTIDE SEQUENCE [LARGE SCALE MRNA]</scope>
    <source>
        <strain>C57BL/6J</strain>
    </source>
</reference>
<reference key="3">
    <citation type="journal article" date="2004" name="Genome Res.">
        <title>The status, quality, and expansion of the NIH full-length cDNA project: the Mammalian Gene Collection (MGC).</title>
        <authorList>
            <consortium name="The MGC Project Team"/>
        </authorList>
    </citation>
    <scope>NUCLEOTIDE SEQUENCE [LARGE SCALE MRNA]</scope>
    <source>
        <strain>FVB/N</strain>
        <tissue>Mammary tumor</tissue>
    </source>
</reference>
<organism>
    <name type="scientific">Mus musculus</name>
    <name type="common">Mouse</name>
    <dbReference type="NCBI Taxonomy" id="10090"/>
    <lineage>
        <taxon>Eukaryota</taxon>
        <taxon>Metazoa</taxon>
        <taxon>Chordata</taxon>
        <taxon>Craniata</taxon>
        <taxon>Vertebrata</taxon>
        <taxon>Euteleostomi</taxon>
        <taxon>Mammalia</taxon>
        <taxon>Eutheria</taxon>
        <taxon>Euarchontoglires</taxon>
        <taxon>Glires</taxon>
        <taxon>Rodentia</taxon>
        <taxon>Myomorpha</taxon>
        <taxon>Muroidea</taxon>
        <taxon>Muridae</taxon>
        <taxon>Murinae</taxon>
        <taxon>Mus</taxon>
        <taxon>Mus</taxon>
    </lineage>
</organism>
<dbReference type="EMBL" id="M36654">
    <property type="protein sequence ID" value="AAA37848.1"/>
    <property type="molecule type" value="mRNA"/>
</dbReference>
<dbReference type="EMBL" id="AK133945">
    <property type="protein sequence ID" value="BAE21943.1"/>
    <property type="molecule type" value="mRNA"/>
</dbReference>
<dbReference type="EMBL" id="BC095947">
    <property type="protein sequence ID" value="AAH95947.1"/>
    <property type="molecule type" value="mRNA"/>
</dbReference>
<dbReference type="CCDS" id="CCDS25297.1"/>
<dbReference type="PIR" id="A31757">
    <property type="entry name" value="A31757"/>
</dbReference>
<dbReference type="RefSeq" id="NP_034589.3">
    <property type="nucleotide sequence ID" value="NM_010459.7"/>
</dbReference>
<dbReference type="SMR" id="P10284"/>
<dbReference type="BioGRID" id="200378">
    <property type="interactions" value="13"/>
</dbReference>
<dbReference type="FunCoup" id="P10284">
    <property type="interactions" value="1210"/>
</dbReference>
<dbReference type="IntAct" id="P10284">
    <property type="interactions" value="2"/>
</dbReference>
<dbReference type="STRING" id="10090.ENSMUSP00000048002"/>
<dbReference type="GlyGen" id="P10284">
    <property type="glycosylation" value="1 site"/>
</dbReference>
<dbReference type="iPTMnet" id="P10284"/>
<dbReference type="PhosphoSitePlus" id="P10284"/>
<dbReference type="PaxDb" id="10090-ENSMUSP00000048002"/>
<dbReference type="PeptideAtlas" id="P10284"/>
<dbReference type="ProteomicsDB" id="266929"/>
<dbReference type="Antibodypedia" id="17849">
    <property type="antibodies" value="313 antibodies from 35 providers"/>
</dbReference>
<dbReference type="DNASU" id="15412"/>
<dbReference type="Ensembl" id="ENSMUST00000049241.9">
    <property type="protein sequence ID" value="ENSMUSP00000048002.8"/>
    <property type="gene ID" value="ENSMUSG00000038692.9"/>
</dbReference>
<dbReference type="GeneID" id="15412"/>
<dbReference type="KEGG" id="mmu:15412"/>
<dbReference type="UCSC" id="uc007lbv.2">
    <property type="organism name" value="mouse"/>
</dbReference>
<dbReference type="AGR" id="MGI:96185"/>
<dbReference type="CTD" id="3214"/>
<dbReference type="MGI" id="MGI:96185">
    <property type="gene designation" value="Hoxb4"/>
</dbReference>
<dbReference type="VEuPathDB" id="HostDB:ENSMUSG00000038692"/>
<dbReference type="eggNOG" id="KOG0489">
    <property type="taxonomic scope" value="Eukaryota"/>
</dbReference>
<dbReference type="GeneTree" id="ENSGT00940000162072"/>
<dbReference type="HOGENOM" id="CLU_061398_0_0_1"/>
<dbReference type="InParanoid" id="P10284"/>
<dbReference type="OMA" id="YPRRSAC"/>
<dbReference type="OrthoDB" id="6159439at2759"/>
<dbReference type="PhylomeDB" id="P10284"/>
<dbReference type="TreeFam" id="TF352857"/>
<dbReference type="BioGRID-ORCS" id="15412">
    <property type="hits" value="1 hit in 79 CRISPR screens"/>
</dbReference>
<dbReference type="PRO" id="PR:P10284"/>
<dbReference type="Proteomes" id="UP000000589">
    <property type="component" value="Chromosome 11"/>
</dbReference>
<dbReference type="RNAct" id="P10284">
    <property type="molecule type" value="protein"/>
</dbReference>
<dbReference type="Bgee" id="ENSMUSG00000038692">
    <property type="expression patterns" value="Expressed in rhombomere 7 and 120 other cell types or tissues"/>
</dbReference>
<dbReference type="GO" id="GO:0005813">
    <property type="term" value="C:centrosome"/>
    <property type="evidence" value="ECO:0007669"/>
    <property type="project" value="Ensembl"/>
</dbReference>
<dbReference type="GO" id="GO:0005654">
    <property type="term" value="C:nucleoplasm"/>
    <property type="evidence" value="ECO:0000304"/>
    <property type="project" value="Reactome"/>
</dbReference>
<dbReference type="GO" id="GO:0003677">
    <property type="term" value="F:DNA binding"/>
    <property type="evidence" value="ECO:0000314"/>
    <property type="project" value="MGI"/>
</dbReference>
<dbReference type="GO" id="GO:0000981">
    <property type="term" value="F:DNA-binding transcription factor activity, RNA polymerase II-specific"/>
    <property type="evidence" value="ECO:0007669"/>
    <property type="project" value="InterPro"/>
</dbReference>
<dbReference type="GO" id="GO:1990837">
    <property type="term" value="F:sequence-specific double-stranded DNA binding"/>
    <property type="evidence" value="ECO:0007669"/>
    <property type="project" value="Ensembl"/>
</dbReference>
<dbReference type="GO" id="GO:0009952">
    <property type="term" value="P:anterior/posterior pattern specification"/>
    <property type="evidence" value="ECO:0000316"/>
    <property type="project" value="MGI"/>
</dbReference>
<dbReference type="GO" id="GO:0048539">
    <property type="term" value="P:bone marrow development"/>
    <property type="evidence" value="ECO:0000315"/>
    <property type="project" value="MGI"/>
</dbReference>
<dbReference type="GO" id="GO:0060216">
    <property type="term" value="P:definitive hemopoiesis"/>
    <property type="evidence" value="ECO:0000316"/>
    <property type="project" value="MGI"/>
</dbReference>
<dbReference type="GO" id="GO:0048704">
    <property type="term" value="P:embryonic skeletal system morphogenesis"/>
    <property type="evidence" value="ECO:0000316"/>
    <property type="project" value="MGI"/>
</dbReference>
<dbReference type="GO" id="GO:0060218">
    <property type="term" value="P:hematopoietic stem cell differentiation"/>
    <property type="evidence" value="ECO:0007669"/>
    <property type="project" value="Ensembl"/>
</dbReference>
<dbReference type="GO" id="GO:0071425">
    <property type="term" value="P:hematopoietic stem cell proliferation"/>
    <property type="evidence" value="ECO:0000315"/>
    <property type="project" value="MGI"/>
</dbReference>
<dbReference type="GO" id="GO:0030097">
    <property type="term" value="P:hemopoiesis"/>
    <property type="evidence" value="ECO:0000315"/>
    <property type="project" value="MGI"/>
</dbReference>
<dbReference type="GO" id="GO:0002011">
    <property type="term" value="P:morphogenesis of an epithelial sheet"/>
    <property type="evidence" value="ECO:0000316"/>
    <property type="project" value="MGI"/>
</dbReference>
<dbReference type="GO" id="GO:0000122">
    <property type="term" value="P:negative regulation of transcription by RNA polymerase II"/>
    <property type="evidence" value="ECO:0000314"/>
    <property type="project" value="MGI"/>
</dbReference>
<dbReference type="GO" id="GO:2000738">
    <property type="term" value="P:positive regulation of stem cell differentiation"/>
    <property type="evidence" value="ECO:0007669"/>
    <property type="project" value="Ensembl"/>
</dbReference>
<dbReference type="GO" id="GO:0045944">
    <property type="term" value="P:positive regulation of transcription by RNA polymerase II"/>
    <property type="evidence" value="ECO:0007669"/>
    <property type="project" value="Ensembl"/>
</dbReference>
<dbReference type="GO" id="GO:0048705">
    <property type="term" value="P:skeletal system morphogenesis"/>
    <property type="evidence" value="ECO:0000315"/>
    <property type="project" value="MGI"/>
</dbReference>
<dbReference type="GO" id="GO:0048103">
    <property type="term" value="P:somatic stem cell division"/>
    <property type="evidence" value="ECO:0000314"/>
    <property type="project" value="MGI"/>
</dbReference>
<dbReference type="GO" id="GO:0048536">
    <property type="term" value="P:spleen development"/>
    <property type="evidence" value="ECO:0000315"/>
    <property type="project" value="MGI"/>
</dbReference>
<dbReference type="CDD" id="cd00086">
    <property type="entry name" value="homeodomain"/>
    <property type="match status" value="1"/>
</dbReference>
<dbReference type="FunFam" id="1.10.10.60:FF:000029">
    <property type="entry name" value="Homeobox protein Hox-D4"/>
    <property type="match status" value="1"/>
</dbReference>
<dbReference type="Gene3D" id="1.10.10.60">
    <property type="entry name" value="Homeodomain-like"/>
    <property type="match status" value="1"/>
</dbReference>
<dbReference type="InterPro" id="IPR050609">
    <property type="entry name" value="Antp_homeobox_Deformed_sf"/>
</dbReference>
<dbReference type="InterPro" id="IPR001356">
    <property type="entry name" value="HD"/>
</dbReference>
<dbReference type="InterPro" id="IPR020479">
    <property type="entry name" value="HD_metazoa"/>
</dbReference>
<dbReference type="InterPro" id="IPR017995">
    <property type="entry name" value="Homeobox_antennapedia"/>
</dbReference>
<dbReference type="InterPro" id="IPR001827">
    <property type="entry name" value="Homeobox_Antennapedia_CS"/>
</dbReference>
<dbReference type="InterPro" id="IPR017970">
    <property type="entry name" value="Homeobox_CS"/>
</dbReference>
<dbReference type="InterPro" id="IPR009057">
    <property type="entry name" value="Homeodomain-like_sf"/>
</dbReference>
<dbReference type="PANTHER" id="PTHR45771:SF3">
    <property type="entry name" value="HOMEOBOX PROTEIN HOX-B4"/>
    <property type="match status" value="1"/>
</dbReference>
<dbReference type="PANTHER" id="PTHR45771">
    <property type="entry name" value="HOMEOTIC PROTEIN DEFORMED"/>
    <property type="match status" value="1"/>
</dbReference>
<dbReference type="Pfam" id="PF00046">
    <property type="entry name" value="Homeodomain"/>
    <property type="match status" value="1"/>
</dbReference>
<dbReference type="PRINTS" id="PR00025">
    <property type="entry name" value="ANTENNAPEDIA"/>
</dbReference>
<dbReference type="PRINTS" id="PR00024">
    <property type="entry name" value="HOMEOBOX"/>
</dbReference>
<dbReference type="SMART" id="SM00389">
    <property type="entry name" value="HOX"/>
    <property type="match status" value="1"/>
</dbReference>
<dbReference type="SUPFAM" id="SSF101447">
    <property type="entry name" value="Formin homology 2 domain (FH2 domain)"/>
    <property type="match status" value="1"/>
</dbReference>
<dbReference type="SUPFAM" id="SSF46689">
    <property type="entry name" value="Homeodomain-like"/>
    <property type="match status" value="1"/>
</dbReference>
<dbReference type="PROSITE" id="PS00032">
    <property type="entry name" value="ANTENNAPEDIA"/>
    <property type="match status" value="1"/>
</dbReference>
<dbReference type="PROSITE" id="PS00027">
    <property type="entry name" value="HOMEOBOX_1"/>
    <property type="match status" value="1"/>
</dbReference>
<dbReference type="PROSITE" id="PS50071">
    <property type="entry name" value="HOMEOBOX_2"/>
    <property type="match status" value="1"/>
</dbReference>
<feature type="chain" id="PRO_0000200123" description="Homeobox protein Hox-B4">
    <location>
        <begin position="1"/>
        <end position="250"/>
    </location>
</feature>
<feature type="DNA-binding region" description="Homeobox" evidence="2">
    <location>
        <begin position="161"/>
        <end position="220"/>
    </location>
</feature>
<feature type="region of interest" description="Disordered" evidence="3">
    <location>
        <begin position="1"/>
        <end position="133"/>
    </location>
</feature>
<feature type="region of interest" description="Disordered" evidence="3">
    <location>
        <begin position="219"/>
        <end position="250"/>
    </location>
</feature>
<feature type="short sequence motif" description="Antp-type hexapeptide">
    <location>
        <begin position="140"/>
        <end position="145"/>
    </location>
</feature>
<feature type="compositionally biased region" description="Polar residues" evidence="3">
    <location>
        <begin position="1"/>
        <end position="12"/>
    </location>
</feature>
<feature type="compositionally biased region" description="Pro residues" evidence="3">
    <location>
        <begin position="71"/>
        <end position="88"/>
    </location>
</feature>
<feature type="compositionally biased region" description="Pro residues" evidence="3">
    <location>
        <begin position="240"/>
        <end position="250"/>
    </location>
</feature>
<feature type="modified residue" description="Phosphoserine" evidence="1">
    <location>
        <position position="89"/>
    </location>
</feature>
<feature type="sequence conflict" description="In Ref. 3; AAH95947." evidence="4" ref="3">
    <original>C</original>
    <variation>F</variation>
    <location>
        <position position="135"/>
    </location>
</feature>
<protein>
    <recommendedName>
        <fullName>Homeobox protein Hox-B4</fullName>
    </recommendedName>
    <alternativeName>
        <fullName>Homeobox protein Hox-2.6</fullName>
    </alternativeName>
</protein>